<reference key="1">
    <citation type="journal article" date="2002" name="Nature">
        <title>Comparison of the genomes of two Xanthomonas pathogens with differing host specificities.</title>
        <authorList>
            <person name="da Silva A.C.R."/>
            <person name="Ferro J.A."/>
            <person name="Reinach F.C."/>
            <person name="Farah C.S."/>
            <person name="Furlan L.R."/>
            <person name="Quaggio R.B."/>
            <person name="Monteiro-Vitorello C.B."/>
            <person name="Van Sluys M.A."/>
            <person name="Almeida N.F. Jr."/>
            <person name="Alves L.M.C."/>
            <person name="do Amaral A.M."/>
            <person name="Bertolini M.C."/>
            <person name="Camargo L.E.A."/>
            <person name="Camarotte G."/>
            <person name="Cannavan F."/>
            <person name="Cardozo J."/>
            <person name="Chambergo F."/>
            <person name="Ciapina L.P."/>
            <person name="Cicarelli R.M.B."/>
            <person name="Coutinho L.L."/>
            <person name="Cursino-Santos J.R."/>
            <person name="El-Dorry H."/>
            <person name="Faria J.B."/>
            <person name="Ferreira A.J.S."/>
            <person name="Ferreira R.C.C."/>
            <person name="Ferro M.I.T."/>
            <person name="Formighieri E.F."/>
            <person name="Franco M.C."/>
            <person name="Greggio C.C."/>
            <person name="Gruber A."/>
            <person name="Katsuyama A.M."/>
            <person name="Kishi L.T."/>
            <person name="Leite R.P."/>
            <person name="Lemos E.G.M."/>
            <person name="Lemos M.V.F."/>
            <person name="Locali E.C."/>
            <person name="Machado M.A."/>
            <person name="Madeira A.M.B.N."/>
            <person name="Martinez-Rossi N.M."/>
            <person name="Martins E.C."/>
            <person name="Meidanis J."/>
            <person name="Menck C.F.M."/>
            <person name="Miyaki C.Y."/>
            <person name="Moon D.H."/>
            <person name="Moreira L.M."/>
            <person name="Novo M.T.M."/>
            <person name="Okura V.K."/>
            <person name="Oliveira M.C."/>
            <person name="Oliveira V.R."/>
            <person name="Pereira H.A."/>
            <person name="Rossi A."/>
            <person name="Sena J.A.D."/>
            <person name="Silva C."/>
            <person name="de Souza R.F."/>
            <person name="Spinola L.A.F."/>
            <person name="Takita M.A."/>
            <person name="Tamura R.E."/>
            <person name="Teixeira E.C."/>
            <person name="Tezza R.I.D."/>
            <person name="Trindade dos Santos M."/>
            <person name="Truffi D."/>
            <person name="Tsai S.M."/>
            <person name="White F.F."/>
            <person name="Setubal J.C."/>
            <person name="Kitajima J.P."/>
        </authorList>
    </citation>
    <scope>NUCLEOTIDE SEQUENCE [LARGE SCALE GENOMIC DNA]</scope>
    <source>
        <strain>ATCC 33913 / DSM 3586 / NCPPB 528 / LMG 568 / P 25</strain>
    </source>
</reference>
<protein>
    <recommendedName>
        <fullName evidence="1">Ribonuclease HII</fullName>
        <shortName evidence="1">RNase HII</shortName>
        <ecNumber evidence="1">3.1.26.4</ecNumber>
    </recommendedName>
</protein>
<comment type="function">
    <text evidence="1">Endonuclease that specifically degrades the RNA of RNA-DNA hybrids.</text>
</comment>
<comment type="catalytic activity">
    <reaction evidence="1">
        <text>Endonucleolytic cleavage to 5'-phosphomonoester.</text>
        <dbReference type="EC" id="3.1.26.4"/>
    </reaction>
</comment>
<comment type="cofactor">
    <cofactor evidence="1">
        <name>Mn(2+)</name>
        <dbReference type="ChEBI" id="CHEBI:29035"/>
    </cofactor>
    <cofactor evidence="1">
        <name>Mg(2+)</name>
        <dbReference type="ChEBI" id="CHEBI:18420"/>
    </cofactor>
    <text evidence="1">Manganese or magnesium. Binds 1 divalent metal ion per monomer in the absence of substrate. May bind a second metal ion after substrate binding.</text>
</comment>
<comment type="subcellular location">
    <subcellularLocation>
        <location evidence="1">Cytoplasm</location>
    </subcellularLocation>
</comment>
<comment type="similarity">
    <text evidence="1">Belongs to the RNase HII family.</text>
</comment>
<dbReference type="EC" id="3.1.26.4" evidence="1"/>
<dbReference type="EMBL" id="AE008922">
    <property type="protein sequence ID" value="AAM40657.1"/>
    <property type="molecule type" value="Genomic_DNA"/>
</dbReference>
<dbReference type="RefSeq" id="NP_636733.1">
    <property type="nucleotide sequence ID" value="NC_003902.1"/>
</dbReference>
<dbReference type="RefSeq" id="WP_011036551.1">
    <property type="nucleotide sequence ID" value="NC_003902.1"/>
</dbReference>
<dbReference type="SMR" id="Q8PAW7"/>
<dbReference type="STRING" id="190485.XCC1359"/>
<dbReference type="EnsemblBacteria" id="AAM40657">
    <property type="protein sequence ID" value="AAM40657"/>
    <property type="gene ID" value="XCC1359"/>
</dbReference>
<dbReference type="KEGG" id="xcc:XCC1359"/>
<dbReference type="PATRIC" id="fig|190485.4.peg.1461"/>
<dbReference type="eggNOG" id="COG0164">
    <property type="taxonomic scope" value="Bacteria"/>
</dbReference>
<dbReference type="HOGENOM" id="CLU_036532_3_2_6"/>
<dbReference type="OrthoDB" id="9803420at2"/>
<dbReference type="Proteomes" id="UP000001010">
    <property type="component" value="Chromosome"/>
</dbReference>
<dbReference type="GO" id="GO:0005737">
    <property type="term" value="C:cytoplasm"/>
    <property type="evidence" value="ECO:0007669"/>
    <property type="project" value="UniProtKB-SubCell"/>
</dbReference>
<dbReference type="GO" id="GO:0032299">
    <property type="term" value="C:ribonuclease H2 complex"/>
    <property type="evidence" value="ECO:0000318"/>
    <property type="project" value="GO_Central"/>
</dbReference>
<dbReference type="GO" id="GO:0030145">
    <property type="term" value="F:manganese ion binding"/>
    <property type="evidence" value="ECO:0007669"/>
    <property type="project" value="UniProtKB-UniRule"/>
</dbReference>
<dbReference type="GO" id="GO:0003723">
    <property type="term" value="F:RNA binding"/>
    <property type="evidence" value="ECO:0007669"/>
    <property type="project" value="InterPro"/>
</dbReference>
<dbReference type="GO" id="GO:0004523">
    <property type="term" value="F:RNA-DNA hybrid ribonuclease activity"/>
    <property type="evidence" value="ECO:0000318"/>
    <property type="project" value="GO_Central"/>
</dbReference>
<dbReference type="GO" id="GO:0043137">
    <property type="term" value="P:DNA replication, removal of RNA primer"/>
    <property type="evidence" value="ECO:0000318"/>
    <property type="project" value="GO_Central"/>
</dbReference>
<dbReference type="GO" id="GO:0006298">
    <property type="term" value="P:mismatch repair"/>
    <property type="evidence" value="ECO:0000318"/>
    <property type="project" value="GO_Central"/>
</dbReference>
<dbReference type="CDD" id="cd07182">
    <property type="entry name" value="RNase_HII_bacteria_HII_like"/>
    <property type="match status" value="1"/>
</dbReference>
<dbReference type="FunFam" id="3.30.420.10:FF:000142">
    <property type="entry name" value="Ribonuclease HII"/>
    <property type="match status" value="1"/>
</dbReference>
<dbReference type="Gene3D" id="3.30.420.10">
    <property type="entry name" value="Ribonuclease H-like superfamily/Ribonuclease H"/>
    <property type="match status" value="1"/>
</dbReference>
<dbReference type="HAMAP" id="MF_00052_B">
    <property type="entry name" value="RNase_HII_B"/>
    <property type="match status" value="1"/>
</dbReference>
<dbReference type="InterPro" id="IPR022898">
    <property type="entry name" value="RNase_HII"/>
</dbReference>
<dbReference type="InterPro" id="IPR001352">
    <property type="entry name" value="RNase_HII/HIII"/>
</dbReference>
<dbReference type="InterPro" id="IPR024567">
    <property type="entry name" value="RNase_HII/HIII_dom"/>
</dbReference>
<dbReference type="InterPro" id="IPR012337">
    <property type="entry name" value="RNaseH-like_sf"/>
</dbReference>
<dbReference type="InterPro" id="IPR036397">
    <property type="entry name" value="RNaseH_sf"/>
</dbReference>
<dbReference type="NCBIfam" id="NF000595">
    <property type="entry name" value="PRK00015.1-3"/>
    <property type="match status" value="1"/>
</dbReference>
<dbReference type="PANTHER" id="PTHR10954">
    <property type="entry name" value="RIBONUCLEASE H2 SUBUNIT A"/>
    <property type="match status" value="1"/>
</dbReference>
<dbReference type="PANTHER" id="PTHR10954:SF18">
    <property type="entry name" value="RIBONUCLEASE HII"/>
    <property type="match status" value="1"/>
</dbReference>
<dbReference type="Pfam" id="PF01351">
    <property type="entry name" value="RNase_HII"/>
    <property type="match status" value="1"/>
</dbReference>
<dbReference type="SUPFAM" id="SSF53098">
    <property type="entry name" value="Ribonuclease H-like"/>
    <property type="match status" value="1"/>
</dbReference>
<dbReference type="PROSITE" id="PS51975">
    <property type="entry name" value="RNASE_H_2"/>
    <property type="match status" value="1"/>
</dbReference>
<evidence type="ECO:0000255" key="1">
    <source>
        <dbReference type="HAMAP-Rule" id="MF_00052"/>
    </source>
</evidence>
<evidence type="ECO:0000255" key="2">
    <source>
        <dbReference type="PROSITE-ProRule" id="PRU01319"/>
    </source>
</evidence>
<accession>Q8PAW7</accession>
<sequence>MTRSSSDRAIVVPAAQNALFTDSPFPTPESRLIAGVDEAGRGPLAGPVAVAAVVFDPAKPRINGLDDSKQLSAERREQLYARIVDRALAWSVVLIDSEEIDRINIYQATMLGMRRAVEGVAHVAGFARIDGNRVPKGLPCPAEALIGGDALDRAIMAASIVAKVTRDRLMRELHAQHPQYRFDLHKGYSTPAHLAALQTHGPCPQHRRSFAPVRRALGLETAQTAWDVPCAPADGLLLAE</sequence>
<feature type="chain" id="PRO_0000111655" description="Ribonuclease HII">
    <location>
        <begin position="1"/>
        <end position="240"/>
    </location>
</feature>
<feature type="domain" description="RNase H type-2" evidence="2">
    <location>
        <begin position="31"/>
        <end position="222"/>
    </location>
</feature>
<feature type="binding site" evidence="1">
    <location>
        <position position="37"/>
    </location>
    <ligand>
        <name>a divalent metal cation</name>
        <dbReference type="ChEBI" id="CHEBI:60240"/>
    </ligand>
</feature>
<feature type="binding site" evidence="1">
    <location>
        <position position="38"/>
    </location>
    <ligand>
        <name>a divalent metal cation</name>
        <dbReference type="ChEBI" id="CHEBI:60240"/>
    </ligand>
</feature>
<feature type="binding site" evidence="1">
    <location>
        <position position="130"/>
    </location>
    <ligand>
        <name>a divalent metal cation</name>
        <dbReference type="ChEBI" id="CHEBI:60240"/>
    </ligand>
</feature>
<proteinExistence type="inferred from homology"/>
<gene>
    <name evidence="1" type="primary">rnhB</name>
    <name type="ordered locus">XCC1359</name>
</gene>
<name>RNH2_XANCP</name>
<keyword id="KW-0963">Cytoplasm</keyword>
<keyword id="KW-0255">Endonuclease</keyword>
<keyword id="KW-0378">Hydrolase</keyword>
<keyword id="KW-0464">Manganese</keyword>
<keyword id="KW-0479">Metal-binding</keyword>
<keyword id="KW-0540">Nuclease</keyword>
<keyword id="KW-1185">Reference proteome</keyword>
<organism>
    <name type="scientific">Xanthomonas campestris pv. campestris (strain ATCC 33913 / DSM 3586 / NCPPB 528 / LMG 568 / P 25)</name>
    <dbReference type="NCBI Taxonomy" id="190485"/>
    <lineage>
        <taxon>Bacteria</taxon>
        <taxon>Pseudomonadati</taxon>
        <taxon>Pseudomonadota</taxon>
        <taxon>Gammaproteobacteria</taxon>
        <taxon>Lysobacterales</taxon>
        <taxon>Lysobacteraceae</taxon>
        <taxon>Xanthomonas</taxon>
    </lineage>
</organism>